<name>IPP2C_MACFA</name>
<protein>
    <recommendedName>
        <fullName>Protein phosphatase inhibitor 2 family member C</fullName>
    </recommendedName>
    <alternativeName>
        <fullName>Protein phosphatase 1, regulatory subunit 2 pseudogene 9</fullName>
    </alternativeName>
    <alternativeName>
        <fullName>Type-1 protein phosphatase inhibitor 4</fullName>
        <shortName>I-4</shortName>
    </alternativeName>
</protein>
<comment type="function">
    <text evidence="2">Functions as a protein phosphatase inhibitor. It inhibits activity of the catalytic subunit of PP1 and weakly inhibits the activity of myosin-associated phosphates (By similarity).</text>
</comment>
<comment type="similarity">
    <text evidence="4">Belongs to the protein phosphatase inhibitor 2 family.</text>
</comment>
<keyword id="KW-0650">Protein phosphatase inhibitor</keyword>
<keyword id="KW-1185">Reference proteome</keyword>
<evidence type="ECO:0000250" key="1"/>
<evidence type="ECO:0000250" key="2">
    <source>
        <dbReference type="UniProtKB" id="O14990"/>
    </source>
</evidence>
<evidence type="ECO:0000256" key="3">
    <source>
        <dbReference type="SAM" id="MobiDB-lite"/>
    </source>
</evidence>
<evidence type="ECO:0000305" key="4"/>
<accession>Q4R615</accession>
<accession>G7P816</accession>
<feature type="chain" id="PRO_0000286139" description="Protein phosphatase inhibitor 2 family member C">
    <location>
        <begin position="1"/>
        <end position="205"/>
    </location>
</feature>
<feature type="region of interest" description="Disordered" evidence="3">
    <location>
        <begin position="1"/>
        <end position="51"/>
    </location>
</feature>
<feature type="region of interest" description="Required for binding PPP1CC" evidence="1">
    <location>
        <begin position="12"/>
        <end position="17"/>
    </location>
</feature>
<feature type="region of interest" description="Required for binding PPP1CC" evidence="1">
    <location>
        <begin position="43"/>
        <end position="55"/>
    </location>
</feature>
<feature type="region of interest" description="Disordered" evidence="3">
    <location>
        <begin position="70"/>
        <end position="114"/>
    </location>
</feature>
<feature type="region of interest" description="Required for binding PPP1CC catalytic center, displacing metal ions and inhibition of PPP1CC catalytic activity" evidence="1">
    <location>
        <begin position="147"/>
        <end position="150"/>
    </location>
</feature>
<feature type="region of interest" description="Disordered" evidence="3">
    <location>
        <begin position="165"/>
        <end position="205"/>
    </location>
</feature>
<feature type="compositionally biased region" description="Low complexity" evidence="3">
    <location>
        <begin position="19"/>
        <end position="34"/>
    </location>
</feature>
<feature type="compositionally biased region" description="Basic and acidic residues" evidence="3">
    <location>
        <begin position="84"/>
        <end position="102"/>
    </location>
</feature>
<feature type="compositionally biased region" description="Basic and acidic residues" evidence="3">
    <location>
        <begin position="174"/>
        <end position="186"/>
    </location>
</feature>
<proteinExistence type="evidence at transcript level"/>
<dbReference type="EMBL" id="AB169376">
    <property type="protein sequence ID" value="BAE01460.1"/>
    <property type="molecule type" value="mRNA"/>
</dbReference>
<dbReference type="EMBL" id="CM001281">
    <property type="protein sequence ID" value="EHH54437.1"/>
    <property type="molecule type" value="Genomic_DNA"/>
</dbReference>
<dbReference type="RefSeq" id="NP_001270534.1">
    <property type="nucleotide sequence ID" value="NM_001283605.1"/>
</dbReference>
<dbReference type="RefSeq" id="XP_045240034.1">
    <property type="nucleotide sequence ID" value="XM_045384099.2"/>
</dbReference>
<dbReference type="Ensembl" id="ENSMFAT00000086578.1">
    <property type="protein sequence ID" value="ENSMFAP00000046357.1"/>
    <property type="gene ID" value="ENSMFAG00000064193.1"/>
</dbReference>
<dbReference type="GeneID" id="101925705"/>
<dbReference type="eggNOG" id="KOG4041">
    <property type="taxonomic scope" value="Eukaryota"/>
</dbReference>
<dbReference type="GeneTree" id="ENSGT00940000164483"/>
<dbReference type="Proteomes" id="UP000009130">
    <property type="component" value="Chromosome 6"/>
</dbReference>
<dbReference type="Proteomes" id="UP000233100">
    <property type="component" value="Chromosome X"/>
</dbReference>
<dbReference type="GO" id="GO:0004864">
    <property type="term" value="F:protein phosphatase inhibitor activity"/>
    <property type="evidence" value="ECO:0007669"/>
    <property type="project" value="UniProtKB-KW"/>
</dbReference>
<dbReference type="GO" id="GO:0009966">
    <property type="term" value="P:regulation of signal transduction"/>
    <property type="evidence" value="ECO:0007669"/>
    <property type="project" value="InterPro"/>
</dbReference>
<dbReference type="Gene3D" id="6.10.250.1050">
    <property type="match status" value="2"/>
</dbReference>
<dbReference type="InterPro" id="IPR007062">
    <property type="entry name" value="PPI-2"/>
</dbReference>
<dbReference type="PANTHER" id="PTHR12398">
    <property type="entry name" value="PROTEIN PHOSPHATASE INHIBITOR"/>
    <property type="match status" value="1"/>
</dbReference>
<dbReference type="PANTHER" id="PTHR12398:SF29">
    <property type="entry name" value="PROTEIN PHOSPHATASE INHIBITOR 2 FAMILY MEMBER C"/>
    <property type="match status" value="1"/>
</dbReference>
<dbReference type="Pfam" id="PF04979">
    <property type="entry name" value="IPP-2"/>
    <property type="match status" value="1"/>
</dbReference>
<sequence>MSASTSSHRPIKGILKNKSSSGSSVATSGQQSGGNIQDVKRKKSQKWDESSILATHRATYRDYDLMKANEPGTSYMNLQDDGEDSVRDVEGEDSVRGVEGKEAMAATDASDHSCEVEEEESNEAYMRKLLLHKQEKKRQFEIRRRLHYNEELNIKLARQLMWNDLQSEDDENEERPQATNEEKTAAEESEEAPLSGGLQTQSCDP</sequence>
<organism>
    <name type="scientific">Macaca fascicularis</name>
    <name type="common">Crab-eating macaque</name>
    <name type="synonym">Cynomolgus monkey</name>
    <dbReference type="NCBI Taxonomy" id="9541"/>
    <lineage>
        <taxon>Eukaryota</taxon>
        <taxon>Metazoa</taxon>
        <taxon>Chordata</taxon>
        <taxon>Craniata</taxon>
        <taxon>Vertebrata</taxon>
        <taxon>Euteleostomi</taxon>
        <taxon>Mammalia</taxon>
        <taxon>Eutheria</taxon>
        <taxon>Euarchontoglires</taxon>
        <taxon>Primates</taxon>
        <taxon>Haplorrhini</taxon>
        <taxon>Catarrhini</taxon>
        <taxon>Cercopithecidae</taxon>
        <taxon>Cercopithecinae</taxon>
        <taxon>Macaca</taxon>
    </lineage>
</organism>
<gene>
    <name type="primary">PPP1R2C</name>
    <name type="synonym">PPP1R2P9</name>
    <name type="ORF">QtsA-19341</name>
</gene>
<reference key="1">
    <citation type="submission" date="2005-06" db="EMBL/GenBank/DDBJ databases">
        <title>DNA sequences of macaque genes expressed in brain or testis and its evolutionary implications.</title>
        <authorList>
            <consortium name="International consortium for macaque cDNA sequencing and analysis"/>
        </authorList>
    </citation>
    <scope>NUCLEOTIDE SEQUENCE [LARGE SCALE MRNA]</scope>
    <source>
        <tissue>Testis</tissue>
    </source>
</reference>
<reference key="2">
    <citation type="journal article" date="2011" name="Nat. Biotechnol.">
        <title>Genome sequencing and comparison of two nonhuman primate animal models, the cynomolgus and Chinese rhesus macaques.</title>
        <authorList>
            <person name="Yan G."/>
            <person name="Zhang G."/>
            <person name="Fang X."/>
            <person name="Zhang Y."/>
            <person name="Li C."/>
            <person name="Ling F."/>
            <person name="Cooper D.N."/>
            <person name="Li Q."/>
            <person name="Li Y."/>
            <person name="van Gool A.J."/>
            <person name="Du H."/>
            <person name="Chen J."/>
            <person name="Chen R."/>
            <person name="Zhang P."/>
            <person name="Huang Z."/>
            <person name="Thompson J.R."/>
            <person name="Meng Y."/>
            <person name="Bai Y."/>
            <person name="Wang J."/>
            <person name="Zhuo M."/>
            <person name="Wang T."/>
            <person name="Huang Y."/>
            <person name="Wei L."/>
            <person name="Li J."/>
            <person name="Wang Z."/>
            <person name="Hu H."/>
            <person name="Yang P."/>
            <person name="Le L."/>
            <person name="Stenson P.D."/>
            <person name="Li B."/>
            <person name="Liu X."/>
            <person name="Ball E.V."/>
            <person name="An N."/>
            <person name="Huang Q."/>
            <person name="Zhang Y."/>
            <person name="Fan W."/>
            <person name="Zhang X."/>
            <person name="Li Y."/>
            <person name="Wang W."/>
            <person name="Katze M.G."/>
            <person name="Su B."/>
            <person name="Nielsen R."/>
            <person name="Yang H."/>
            <person name="Wang J."/>
            <person name="Wang X."/>
            <person name="Wang J."/>
        </authorList>
    </citation>
    <scope>NUCLEOTIDE SEQUENCE [LARGE SCALE GENOMIC DNA]</scope>
</reference>